<name>YCAD_ECOSE</name>
<organism>
    <name type="scientific">Escherichia coli (strain SE11)</name>
    <dbReference type="NCBI Taxonomy" id="409438"/>
    <lineage>
        <taxon>Bacteria</taxon>
        <taxon>Pseudomonadati</taxon>
        <taxon>Pseudomonadota</taxon>
        <taxon>Gammaproteobacteria</taxon>
        <taxon>Enterobacterales</taxon>
        <taxon>Enterobacteriaceae</taxon>
        <taxon>Escherichia</taxon>
    </lineage>
</organism>
<evidence type="ECO:0000255" key="1">
    <source>
        <dbReference type="HAMAP-Rule" id="MF_01149"/>
    </source>
</evidence>
<feature type="chain" id="PRO_1000137489" description="Uncharacterized MFS-type transporter YcaD">
    <location>
        <begin position="1"/>
        <end position="382"/>
    </location>
</feature>
<feature type="transmembrane region" description="Helical" evidence="1">
    <location>
        <begin position="14"/>
        <end position="34"/>
    </location>
</feature>
<feature type="transmembrane region" description="Helical" evidence="1">
    <location>
        <begin position="45"/>
        <end position="65"/>
    </location>
</feature>
<feature type="transmembrane region" description="Helical" evidence="1">
    <location>
        <begin position="79"/>
        <end position="99"/>
    </location>
</feature>
<feature type="transmembrane region" description="Helical" evidence="1">
    <location>
        <begin position="102"/>
        <end position="122"/>
    </location>
</feature>
<feature type="transmembrane region" description="Helical" evidence="1">
    <location>
        <begin position="131"/>
        <end position="151"/>
    </location>
</feature>
<feature type="transmembrane region" description="Helical" evidence="1">
    <location>
        <begin position="157"/>
        <end position="177"/>
    </location>
</feature>
<feature type="transmembrane region" description="Helical" evidence="1">
    <location>
        <begin position="204"/>
        <end position="224"/>
    </location>
</feature>
<feature type="transmembrane region" description="Helical" evidence="1">
    <location>
        <begin position="235"/>
        <end position="255"/>
    </location>
</feature>
<feature type="transmembrane region" description="Helical" evidence="1">
    <location>
        <begin position="270"/>
        <end position="290"/>
    </location>
</feature>
<feature type="transmembrane region" description="Helical" evidence="1">
    <location>
        <begin position="291"/>
        <end position="311"/>
    </location>
</feature>
<feature type="transmembrane region" description="Helical" evidence="1">
    <location>
        <begin position="325"/>
        <end position="345"/>
    </location>
</feature>
<feature type="transmembrane region" description="Helical" evidence="1">
    <location>
        <begin position="348"/>
        <end position="368"/>
    </location>
</feature>
<comment type="subcellular location">
    <subcellularLocation>
        <location evidence="1">Cell inner membrane</location>
        <topology evidence="1">Multi-pass membrane protein</topology>
    </subcellularLocation>
</comment>
<comment type="similarity">
    <text evidence="1">Belongs to the major facilitator superfamily. YcaD (TC 2.A.1.26) family.</text>
</comment>
<protein>
    <recommendedName>
        <fullName evidence="1">Uncharacterized MFS-type transporter YcaD</fullName>
    </recommendedName>
</protein>
<dbReference type="EMBL" id="AP009240">
    <property type="protein sequence ID" value="BAG76481.1"/>
    <property type="molecule type" value="Genomic_DNA"/>
</dbReference>
<dbReference type="RefSeq" id="WP_000109289.1">
    <property type="nucleotide sequence ID" value="NC_011415.1"/>
</dbReference>
<dbReference type="SMR" id="B6I8X0"/>
<dbReference type="KEGG" id="ecy:ECSE_0957"/>
<dbReference type="HOGENOM" id="CLU_035018_1_2_6"/>
<dbReference type="Proteomes" id="UP000008199">
    <property type="component" value="Chromosome"/>
</dbReference>
<dbReference type="GO" id="GO:0005886">
    <property type="term" value="C:plasma membrane"/>
    <property type="evidence" value="ECO:0007669"/>
    <property type="project" value="UniProtKB-SubCell"/>
</dbReference>
<dbReference type="GO" id="GO:0022857">
    <property type="term" value="F:transmembrane transporter activity"/>
    <property type="evidence" value="ECO:0007669"/>
    <property type="project" value="UniProtKB-UniRule"/>
</dbReference>
<dbReference type="CDD" id="cd17477">
    <property type="entry name" value="MFS_YcaD_like"/>
    <property type="match status" value="1"/>
</dbReference>
<dbReference type="FunFam" id="1.20.1250.20:FF:000041">
    <property type="entry name" value="Uncharacterized MFS-type transporter YcaD"/>
    <property type="match status" value="1"/>
</dbReference>
<dbReference type="FunFam" id="1.20.1250.20:FF:000066">
    <property type="entry name" value="Uncharacterized MFS-type transporter YcaD"/>
    <property type="match status" value="1"/>
</dbReference>
<dbReference type="Gene3D" id="1.20.1250.20">
    <property type="entry name" value="MFS general substrate transporter like domains"/>
    <property type="match status" value="2"/>
</dbReference>
<dbReference type="HAMAP" id="MF_01149">
    <property type="entry name" value="MFS_YcaD"/>
    <property type="match status" value="1"/>
</dbReference>
<dbReference type="InterPro" id="IPR011701">
    <property type="entry name" value="MFS"/>
</dbReference>
<dbReference type="InterPro" id="IPR020846">
    <property type="entry name" value="MFS_dom"/>
</dbReference>
<dbReference type="InterPro" id="IPR036259">
    <property type="entry name" value="MFS_trans_sf"/>
</dbReference>
<dbReference type="InterPro" id="IPR023745">
    <property type="entry name" value="MFS_YcaD"/>
</dbReference>
<dbReference type="InterPro" id="IPR047200">
    <property type="entry name" value="MFS_YcaD-like"/>
</dbReference>
<dbReference type="NCBIfam" id="NF002962">
    <property type="entry name" value="PRK03633.1"/>
    <property type="match status" value="1"/>
</dbReference>
<dbReference type="PANTHER" id="PTHR23521">
    <property type="entry name" value="TRANSPORTER MFS SUPERFAMILY"/>
    <property type="match status" value="1"/>
</dbReference>
<dbReference type="PANTHER" id="PTHR23521:SF2">
    <property type="entry name" value="TRANSPORTER MFS SUPERFAMILY"/>
    <property type="match status" value="1"/>
</dbReference>
<dbReference type="Pfam" id="PF07690">
    <property type="entry name" value="MFS_1"/>
    <property type="match status" value="1"/>
</dbReference>
<dbReference type="SUPFAM" id="SSF103473">
    <property type="entry name" value="MFS general substrate transporter"/>
    <property type="match status" value="1"/>
</dbReference>
<dbReference type="PROSITE" id="PS50850">
    <property type="entry name" value="MFS"/>
    <property type="match status" value="1"/>
</dbReference>
<proteinExistence type="inferred from homology"/>
<reference key="1">
    <citation type="journal article" date="2008" name="DNA Res.">
        <title>Complete genome sequence and comparative analysis of the wild-type commensal Escherichia coli strain SE11 isolated from a healthy adult.</title>
        <authorList>
            <person name="Oshima K."/>
            <person name="Toh H."/>
            <person name="Ogura Y."/>
            <person name="Sasamoto H."/>
            <person name="Morita H."/>
            <person name="Park S.-H."/>
            <person name="Ooka T."/>
            <person name="Iyoda S."/>
            <person name="Taylor T.D."/>
            <person name="Hayashi T."/>
            <person name="Itoh K."/>
            <person name="Hattori M."/>
        </authorList>
    </citation>
    <scope>NUCLEOTIDE SEQUENCE [LARGE SCALE GENOMIC DNA]</scope>
    <source>
        <strain>SE11</strain>
    </source>
</reference>
<accession>B6I8X0</accession>
<gene>
    <name evidence="1" type="primary">ycaD</name>
    <name type="ordered locus">ECSE_0957</name>
</gene>
<keyword id="KW-0997">Cell inner membrane</keyword>
<keyword id="KW-1003">Cell membrane</keyword>
<keyword id="KW-0472">Membrane</keyword>
<keyword id="KW-0812">Transmembrane</keyword>
<keyword id="KW-1133">Transmembrane helix</keyword>
<keyword id="KW-0813">Transport</keyword>
<sequence length="382" mass="41444">MSTYTRPVMLLLSGLLLLTLAIAVLNTLVPLWLAQEHMSTWQVGVVSSSYFTGNLVGTLLTGYVIKRIGFNRSYYLASFIFAAGCAGLGLMIGFWSWLAWRFVAGVGCAMIWVVVESALMCSGTSRNRGRLLAAYMMVYYVGTFLGQLLVSKVSTELMSVLPWVTGLTLAGILPLLFTRVLNQQAENHDSTSITAMLKLRQARLGVNGCIISGIVLGSLYGLMPLYLNHKGVSNASIGFWMAVLVSAGILGQWPIGRLADKFGRLLVLRVQVFVVILGSIAMLSQAAMAPALFILGAAGFTLYPVAMAWACEKVEHHQLVAMNQALLLSYTVGSLLGPSFTAMLMQNFSDNLLFIMIASVSFIYLLMLLRNAGHTPKPVAHV</sequence>